<keyword id="KW-1185">Reference proteome</keyword>
<name>YQGE_SHIB3</name>
<dbReference type="EMBL" id="CP001063">
    <property type="protein sequence ID" value="ACD06343.1"/>
    <property type="molecule type" value="Genomic_DNA"/>
</dbReference>
<dbReference type="RefSeq" id="WP_001053178.1">
    <property type="nucleotide sequence ID" value="NC_010658.1"/>
</dbReference>
<dbReference type="SMR" id="B2U0W8"/>
<dbReference type="STRING" id="344609.SbBS512_E3380"/>
<dbReference type="KEGG" id="sbc:SbBS512_E3380"/>
<dbReference type="HOGENOM" id="CLU_057596_1_0_6"/>
<dbReference type="Proteomes" id="UP000001030">
    <property type="component" value="Chromosome"/>
</dbReference>
<dbReference type="GO" id="GO:0005829">
    <property type="term" value="C:cytosol"/>
    <property type="evidence" value="ECO:0007669"/>
    <property type="project" value="TreeGrafter"/>
</dbReference>
<dbReference type="FunFam" id="3.30.70.1300:FF:000001">
    <property type="entry name" value="UPF0301 protein YqgE"/>
    <property type="match status" value="1"/>
</dbReference>
<dbReference type="Gene3D" id="3.40.1740.10">
    <property type="entry name" value="VC0467-like"/>
    <property type="match status" value="1"/>
</dbReference>
<dbReference type="Gene3D" id="3.30.70.1300">
    <property type="entry name" value="VC0467-like domains"/>
    <property type="match status" value="1"/>
</dbReference>
<dbReference type="HAMAP" id="MF_00758">
    <property type="entry name" value="UPF0301"/>
    <property type="match status" value="1"/>
</dbReference>
<dbReference type="InterPro" id="IPR003774">
    <property type="entry name" value="AlgH-like"/>
</dbReference>
<dbReference type="NCBIfam" id="NF001266">
    <property type="entry name" value="PRK00228.1-1"/>
    <property type="match status" value="1"/>
</dbReference>
<dbReference type="PANTHER" id="PTHR30327">
    <property type="entry name" value="UNCHARACTERIZED PROTEIN YQGE"/>
    <property type="match status" value="1"/>
</dbReference>
<dbReference type="PANTHER" id="PTHR30327:SF1">
    <property type="entry name" value="UPF0301 PROTEIN YQGE"/>
    <property type="match status" value="1"/>
</dbReference>
<dbReference type="Pfam" id="PF02622">
    <property type="entry name" value="DUF179"/>
    <property type="match status" value="1"/>
</dbReference>
<dbReference type="SUPFAM" id="SSF143456">
    <property type="entry name" value="VC0467-like"/>
    <property type="match status" value="1"/>
</dbReference>
<accession>B2U0W8</accession>
<organism>
    <name type="scientific">Shigella boydii serotype 18 (strain CDC 3083-94 / BS512)</name>
    <dbReference type="NCBI Taxonomy" id="344609"/>
    <lineage>
        <taxon>Bacteria</taxon>
        <taxon>Pseudomonadati</taxon>
        <taxon>Pseudomonadota</taxon>
        <taxon>Gammaproteobacteria</taxon>
        <taxon>Enterobacterales</taxon>
        <taxon>Enterobacteriaceae</taxon>
        <taxon>Shigella</taxon>
    </lineage>
</organism>
<feature type="chain" id="PRO_1000198301" description="UPF0301 protein YqgE">
    <location>
        <begin position="1"/>
        <end position="187"/>
    </location>
</feature>
<proteinExistence type="inferred from homology"/>
<comment type="similarity">
    <text evidence="1">Belongs to the UPF0301 (AlgH) family.</text>
</comment>
<protein>
    <recommendedName>
        <fullName evidence="1">UPF0301 protein YqgE</fullName>
    </recommendedName>
</protein>
<evidence type="ECO:0000255" key="1">
    <source>
        <dbReference type="HAMAP-Rule" id="MF_00758"/>
    </source>
</evidence>
<gene>
    <name evidence="1" type="primary">yqgE</name>
    <name type="ordered locus">SbBS512_E3380</name>
</gene>
<reference key="1">
    <citation type="submission" date="2008-05" db="EMBL/GenBank/DDBJ databases">
        <title>Complete sequence of Shigella boydii serotype 18 strain BS512.</title>
        <authorList>
            <person name="Rasko D.A."/>
            <person name="Rosovitz M."/>
            <person name="Maurelli A.T."/>
            <person name="Myers G."/>
            <person name="Seshadri R."/>
            <person name="Cer R."/>
            <person name="Jiang L."/>
            <person name="Ravel J."/>
            <person name="Sebastian Y."/>
        </authorList>
    </citation>
    <scope>NUCLEOTIDE SEQUENCE [LARGE SCALE GENOMIC DNA]</scope>
    <source>
        <strain>CDC 3083-94 / BS512</strain>
    </source>
</reference>
<sequence length="187" mass="20686">MNLQHHFLIAMPALQDPIFRRSVVYICEHNTNGAMGIIVNKPLENLKIEGILEKLKITPEPRDESIRLDKPVMLGGPLAEDRGFILHTPPSNFASSIRISDNTVMTTSRDVLETLGTDKQPSDVLVALGYASWEKGQLEQEILDNAWLTAPADLNILFKTPIADRWREAAKLIGVDILTMPGVAGHA</sequence>